<keyword id="KW-0007">Acetylation</keyword>
<keyword id="KW-0963">Cytoplasm</keyword>
<keyword id="KW-0496">Mitochondrion</keyword>
<keyword id="KW-0520">NAD</keyword>
<keyword id="KW-0539">Nucleus</keyword>
<keyword id="KW-0560">Oxidoreductase</keyword>
<keyword id="KW-1185">Reference proteome</keyword>
<keyword id="KW-0809">Transit peptide</keyword>
<organism>
    <name type="scientific">Bos taurus</name>
    <name type="common">Bovine</name>
    <dbReference type="NCBI Taxonomy" id="9913"/>
    <lineage>
        <taxon>Eukaryota</taxon>
        <taxon>Metazoa</taxon>
        <taxon>Chordata</taxon>
        <taxon>Craniata</taxon>
        <taxon>Vertebrata</taxon>
        <taxon>Euteleostomi</taxon>
        <taxon>Mammalia</taxon>
        <taxon>Eutheria</taxon>
        <taxon>Laurasiatheria</taxon>
        <taxon>Artiodactyla</taxon>
        <taxon>Ruminantia</taxon>
        <taxon>Pecora</taxon>
        <taxon>Bovidae</taxon>
        <taxon>Bovinae</taxon>
        <taxon>Bos</taxon>
    </lineage>
</organism>
<protein>
    <recommendedName>
        <fullName>Alpha-aminoadipic semialdehyde dehydrogenase</fullName>
        <shortName>Alpha-AASA dehydrogenase</shortName>
        <ecNumber evidence="2">1.2.1.31</ecNumber>
    </recommendedName>
    <alternativeName>
        <fullName>Aldehyde dehydrogenase family 7 member A1</fullName>
        <ecNumber evidence="2">1.2.1.3</ecNumber>
    </alternativeName>
    <alternativeName>
        <fullName>Antiquitin-1</fullName>
    </alternativeName>
    <alternativeName>
        <fullName>Betaine aldehyde dehydrogenase</fullName>
        <ecNumber evidence="2">1.2.1.8</ecNumber>
    </alternativeName>
    <alternativeName>
        <fullName>Delta1-piperideine-6-carboxylate dehydrogenase</fullName>
        <shortName>P6c dehydrogenase</shortName>
    </alternativeName>
</protein>
<dbReference type="EC" id="1.2.1.31" evidence="2"/>
<dbReference type="EC" id="1.2.1.3" evidence="2"/>
<dbReference type="EC" id="1.2.1.8" evidence="2"/>
<dbReference type="EMBL" id="BC105406">
    <property type="protein sequence ID" value="AAI05407.1"/>
    <property type="status" value="ALT_INIT"/>
    <property type="molecule type" value="mRNA"/>
</dbReference>
<dbReference type="RefSeq" id="NP_001039434.2">
    <property type="nucleotide sequence ID" value="NM_001045969.2"/>
</dbReference>
<dbReference type="SMR" id="Q2KJC9"/>
<dbReference type="FunCoup" id="Q2KJC9">
    <property type="interactions" value="1801"/>
</dbReference>
<dbReference type="IntAct" id="Q2KJC9">
    <property type="interactions" value="2"/>
</dbReference>
<dbReference type="STRING" id="9913.ENSBTAP00000048297"/>
<dbReference type="PaxDb" id="9913-ENSBTAP00000048297"/>
<dbReference type="PeptideAtlas" id="Q2KJC9"/>
<dbReference type="GeneID" id="507477"/>
<dbReference type="KEGG" id="bta:507477"/>
<dbReference type="CTD" id="501"/>
<dbReference type="eggNOG" id="KOG2453">
    <property type="taxonomic scope" value="Eukaryota"/>
</dbReference>
<dbReference type="InParanoid" id="Q2KJC9"/>
<dbReference type="OrthoDB" id="310895at2759"/>
<dbReference type="UniPathway" id="UPA00529">
    <property type="reaction ID" value="UER00386"/>
</dbReference>
<dbReference type="Proteomes" id="UP000009136">
    <property type="component" value="Unplaced"/>
</dbReference>
<dbReference type="GO" id="GO:0005829">
    <property type="term" value="C:cytosol"/>
    <property type="evidence" value="ECO:0000250"/>
    <property type="project" value="UniProtKB"/>
</dbReference>
<dbReference type="GO" id="GO:0005739">
    <property type="term" value="C:mitochondrion"/>
    <property type="evidence" value="ECO:0000250"/>
    <property type="project" value="UniProtKB"/>
</dbReference>
<dbReference type="GO" id="GO:0005634">
    <property type="term" value="C:nucleus"/>
    <property type="evidence" value="ECO:0007669"/>
    <property type="project" value="UniProtKB-SubCell"/>
</dbReference>
<dbReference type="GO" id="GO:0004029">
    <property type="term" value="F:aldehyde dehydrogenase (NAD+) activity"/>
    <property type="evidence" value="ECO:0000250"/>
    <property type="project" value="UniProtKB"/>
</dbReference>
<dbReference type="GO" id="GO:0008802">
    <property type="term" value="F:betaine-aldehyde dehydrogenase (NAD+) activity"/>
    <property type="evidence" value="ECO:0000250"/>
    <property type="project" value="UniProtKB"/>
</dbReference>
<dbReference type="GO" id="GO:0042802">
    <property type="term" value="F:identical protein binding"/>
    <property type="evidence" value="ECO:0000250"/>
    <property type="project" value="UniProtKB"/>
</dbReference>
<dbReference type="GO" id="GO:0004043">
    <property type="term" value="F:L-aminoadipate-semialdehyde dehydrogenase activity"/>
    <property type="evidence" value="ECO:0007669"/>
    <property type="project" value="UniProtKB-EC"/>
</dbReference>
<dbReference type="GO" id="GO:0019285">
    <property type="term" value="P:glycine betaine biosynthetic process from choline"/>
    <property type="evidence" value="ECO:0007669"/>
    <property type="project" value="UniProtKB-UniPathway"/>
</dbReference>
<dbReference type="CDD" id="cd07130">
    <property type="entry name" value="ALDH_F7_AASADH"/>
    <property type="match status" value="1"/>
</dbReference>
<dbReference type="FunFam" id="3.40.309.10:FF:000018">
    <property type="entry name" value="Alpha-aminoadipic semialdehyde dehydrogenase"/>
    <property type="match status" value="1"/>
</dbReference>
<dbReference type="FunFam" id="3.40.605.10:FF:000015">
    <property type="entry name" value="alpha-aminoadipic semialdehyde dehydrogenase"/>
    <property type="match status" value="1"/>
</dbReference>
<dbReference type="Gene3D" id="3.40.605.10">
    <property type="entry name" value="Aldehyde Dehydrogenase, Chain A, domain 1"/>
    <property type="match status" value="1"/>
</dbReference>
<dbReference type="Gene3D" id="3.40.309.10">
    <property type="entry name" value="Aldehyde Dehydrogenase, Chain A, domain 2"/>
    <property type="match status" value="1"/>
</dbReference>
<dbReference type="InterPro" id="IPR016161">
    <property type="entry name" value="Ald_DH/histidinol_DH"/>
</dbReference>
<dbReference type="InterPro" id="IPR016163">
    <property type="entry name" value="Ald_DH_C"/>
</dbReference>
<dbReference type="InterPro" id="IPR029510">
    <property type="entry name" value="Ald_DH_CS_GLU"/>
</dbReference>
<dbReference type="InterPro" id="IPR016162">
    <property type="entry name" value="Ald_DH_N"/>
</dbReference>
<dbReference type="InterPro" id="IPR015590">
    <property type="entry name" value="Aldehyde_DH_dom"/>
</dbReference>
<dbReference type="InterPro" id="IPR044638">
    <property type="entry name" value="ALDH7A1-like"/>
</dbReference>
<dbReference type="PANTHER" id="PTHR43521">
    <property type="entry name" value="ALPHA-AMINOADIPIC SEMIALDEHYDE DEHYDROGENASE"/>
    <property type="match status" value="1"/>
</dbReference>
<dbReference type="PANTHER" id="PTHR43521:SF1">
    <property type="entry name" value="ALPHA-AMINOADIPIC SEMIALDEHYDE DEHYDROGENASE"/>
    <property type="match status" value="1"/>
</dbReference>
<dbReference type="Pfam" id="PF00171">
    <property type="entry name" value="Aldedh"/>
    <property type="match status" value="1"/>
</dbReference>
<dbReference type="SUPFAM" id="SSF53720">
    <property type="entry name" value="ALDH-like"/>
    <property type="match status" value="1"/>
</dbReference>
<dbReference type="PROSITE" id="PS00687">
    <property type="entry name" value="ALDEHYDE_DEHYDR_GLU"/>
    <property type="match status" value="1"/>
</dbReference>
<evidence type="ECO:0000250" key="1"/>
<evidence type="ECO:0000250" key="2">
    <source>
        <dbReference type="UniProtKB" id="P49419"/>
    </source>
</evidence>
<evidence type="ECO:0000250" key="3">
    <source>
        <dbReference type="UniProtKB" id="Q9DBF1"/>
    </source>
</evidence>
<evidence type="ECO:0000255" key="4"/>
<evidence type="ECO:0000255" key="5">
    <source>
        <dbReference type="PROSITE-ProRule" id="PRU10007"/>
    </source>
</evidence>
<evidence type="ECO:0000305" key="6"/>
<comment type="function">
    <text evidence="2">Multifunctional enzyme mediating important protective effects. Metabolizes betaine aldehyde to betaine, an important cellular osmolyte and methyl donor. Protects cells from oxidative stress by metabolizing a number of lipid peroxidation-derived aldehydes. Involved in lysine catabolism.</text>
</comment>
<comment type="catalytic activity">
    <reaction evidence="2">
        <text>nonanal + NAD(+) + H2O = nonanoate + NADH + 2 H(+)</text>
        <dbReference type="Rhea" id="RHEA:69759"/>
        <dbReference type="ChEBI" id="CHEBI:15377"/>
        <dbReference type="ChEBI" id="CHEBI:15378"/>
        <dbReference type="ChEBI" id="CHEBI:32361"/>
        <dbReference type="ChEBI" id="CHEBI:57540"/>
        <dbReference type="ChEBI" id="CHEBI:57945"/>
        <dbReference type="ChEBI" id="CHEBI:84268"/>
    </reaction>
    <physiologicalReaction direction="left-to-right" evidence="2">
        <dbReference type="Rhea" id="RHEA:69760"/>
    </physiologicalReaction>
</comment>
<comment type="catalytic activity">
    <reaction evidence="2">
        <text>(S)-2-amino-6-oxohexanoate + NAD(+) + H2O = L-2-aminoadipate + NADH + 2 H(+)</text>
        <dbReference type="Rhea" id="RHEA:12308"/>
        <dbReference type="ChEBI" id="CHEBI:15377"/>
        <dbReference type="ChEBI" id="CHEBI:15378"/>
        <dbReference type="ChEBI" id="CHEBI:57540"/>
        <dbReference type="ChEBI" id="CHEBI:57945"/>
        <dbReference type="ChEBI" id="CHEBI:58321"/>
        <dbReference type="ChEBI" id="CHEBI:58672"/>
        <dbReference type="EC" id="1.2.1.31"/>
    </reaction>
    <physiologicalReaction direction="left-to-right" evidence="2">
        <dbReference type="Rhea" id="RHEA:12309"/>
    </physiologicalReaction>
</comment>
<comment type="catalytic activity">
    <reaction evidence="2">
        <text>betaine aldehyde + NAD(+) + H2O = glycine betaine + NADH + 2 H(+)</text>
        <dbReference type="Rhea" id="RHEA:15305"/>
        <dbReference type="ChEBI" id="CHEBI:15377"/>
        <dbReference type="ChEBI" id="CHEBI:15378"/>
        <dbReference type="ChEBI" id="CHEBI:15710"/>
        <dbReference type="ChEBI" id="CHEBI:17750"/>
        <dbReference type="ChEBI" id="CHEBI:57540"/>
        <dbReference type="ChEBI" id="CHEBI:57945"/>
        <dbReference type="EC" id="1.2.1.8"/>
    </reaction>
    <physiologicalReaction direction="left-to-right" evidence="2">
        <dbReference type="Rhea" id="RHEA:15306"/>
    </physiologicalReaction>
</comment>
<comment type="catalytic activity">
    <reaction evidence="2">
        <text>an aldehyde + NAD(+) + H2O = a carboxylate + NADH + 2 H(+)</text>
        <dbReference type="Rhea" id="RHEA:16185"/>
        <dbReference type="ChEBI" id="CHEBI:15377"/>
        <dbReference type="ChEBI" id="CHEBI:15378"/>
        <dbReference type="ChEBI" id="CHEBI:17478"/>
        <dbReference type="ChEBI" id="CHEBI:29067"/>
        <dbReference type="ChEBI" id="CHEBI:57540"/>
        <dbReference type="ChEBI" id="CHEBI:57945"/>
        <dbReference type="EC" id="1.2.1.3"/>
    </reaction>
    <physiologicalReaction direction="left-to-right" evidence="2">
        <dbReference type="Rhea" id="RHEA:16186"/>
    </physiologicalReaction>
</comment>
<comment type="catalytic activity">
    <reaction evidence="2">
        <text>hexanal + NAD(+) + H2O = hexanoate + NADH + 2 H(+)</text>
        <dbReference type="Rhea" id="RHEA:67276"/>
        <dbReference type="ChEBI" id="CHEBI:15377"/>
        <dbReference type="ChEBI" id="CHEBI:15378"/>
        <dbReference type="ChEBI" id="CHEBI:17120"/>
        <dbReference type="ChEBI" id="CHEBI:57540"/>
        <dbReference type="ChEBI" id="CHEBI:57945"/>
        <dbReference type="ChEBI" id="CHEBI:88528"/>
    </reaction>
    <physiologicalReaction direction="left-to-right" evidence="2">
        <dbReference type="Rhea" id="RHEA:67277"/>
    </physiologicalReaction>
</comment>
<comment type="catalytic activity">
    <reaction evidence="2">
        <text>octanal + NAD(+) + H2O = octanoate + NADH + 2 H(+)</text>
        <dbReference type="Rhea" id="RHEA:44100"/>
        <dbReference type="ChEBI" id="CHEBI:15377"/>
        <dbReference type="ChEBI" id="CHEBI:15378"/>
        <dbReference type="ChEBI" id="CHEBI:17935"/>
        <dbReference type="ChEBI" id="CHEBI:25646"/>
        <dbReference type="ChEBI" id="CHEBI:57540"/>
        <dbReference type="ChEBI" id="CHEBI:57945"/>
    </reaction>
    <physiologicalReaction direction="left-to-right" evidence="2">
        <dbReference type="Rhea" id="RHEA:44101"/>
    </physiologicalReaction>
</comment>
<comment type="catalytic activity">
    <reaction evidence="2">
        <text>(E)-non-2-enal + NAD(+) + H2O = (E)-non-2-enoate + NADH + 2 H(+)</text>
        <dbReference type="Rhea" id="RHEA:69767"/>
        <dbReference type="ChEBI" id="CHEBI:15377"/>
        <dbReference type="ChEBI" id="CHEBI:15378"/>
        <dbReference type="ChEBI" id="CHEBI:57540"/>
        <dbReference type="ChEBI" id="CHEBI:57945"/>
        <dbReference type="ChEBI" id="CHEBI:142592"/>
        <dbReference type="ChEBI" id="CHEBI:143908"/>
    </reaction>
    <physiologicalReaction direction="left-to-right" evidence="2">
        <dbReference type="Rhea" id="RHEA:69768"/>
    </physiologicalReaction>
</comment>
<comment type="catalytic activity">
    <reaction evidence="2">
        <text>(E)-4-hydroxynon-2-enal + NAD(+) + H2O = (E)-4-hydroxynon-2-enoate + NADH + 2 H(+)</text>
        <dbReference type="Rhea" id="RHEA:67248"/>
        <dbReference type="ChEBI" id="CHEBI:15377"/>
        <dbReference type="ChEBI" id="CHEBI:15378"/>
        <dbReference type="ChEBI" id="CHEBI:57540"/>
        <dbReference type="ChEBI" id="CHEBI:57945"/>
        <dbReference type="ChEBI" id="CHEBI:58968"/>
        <dbReference type="ChEBI" id="CHEBI:142920"/>
    </reaction>
    <physiologicalReaction direction="left-to-right" evidence="2">
        <dbReference type="Rhea" id="RHEA:67249"/>
    </physiologicalReaction>
</comment>
<comment type="pathway">
    <text evidence="2">Amine and polyamine biosynthesis; betaine biosynthesis via choline pathway; betaine from betaine aldehyde: step 1/1.</text>
</comment>
<comment type="subunit">
    <text evidence="2">Homotetramer.</text>
</comment>
<comment type="subcellular location">
    <subcellularLocation>
        <location evidence="2">Cytoplasm</location>
        <location evidence="2">Cytosol</location>
    </subcellularLocation>
    <subcellularLocation>
        <location evidence="2">Nucleus</location>
    </subcellularLocation>
    <subcellularLocation>
        <location evidence="2">Mitochondrion</location>
    </subcellularLocation>
</comment>
<comment type="similarity">
    <text evidence="6">Belongs to the aldehyde dehydrogenase family.</text>
</comment>
<comment type="sequence caution" evidence="6">
    <conflict type="erroneous initiation">
        <sequence resource="EMBL-CDS" id="AAI05407"/>
    </conflict>
    <text>Truncated N-terminus.</text>
</comment>
<accession>Q2KJC9</accession>
<gene>
    <name type="primary">ALDH7A1</name>
</gene>
<feature type="transit peptide" description="Mitochondrion" evidence="4">
    <location>
        <begin position="1"/>
        <end position="26"/>
    </location>
</feature>
<feature type="chain" id="PRO_0000244567" description="Alpha-aminoadipic semialdehyde dehydrogenase">
    <location>
        <begin position="27"/>
        <end position="539"/>
    </location>
</feature>
<feature type="active site" description="Proton acceptor" evidence="5">
    <location>
        <position position="296"/>
    </location>
</feature>
<feature type="active site" description="Nucleophile" evidence="5">
    <location>
        <position position="330"/>
    </location>
</feature>
<feature type="binding site" evidence="2">
    <location>
        <begin position="192"/>
        <end position="194"/>
    </location>
    <ligand>
        <name>NAD(+)</name>
        <dbReference type="ChEBI" id="CHEBI:57540"/>
    </ligand>
</feature>
<feature type="binding site" evidence="2">
    <location>
        <position position="218"/>
    </location>
    <ligand>
        <name>NAD(+)</name>
        <dbReference type="ChEBI" id="CHEBI:57540"/>
    </ligand>
</feature>
<feature type="binding site" evidence="2">
    <location>
        <begin position="258"/>
        <end position="259"/>
    </location>
    <ligand>
        <name>NAD(+)</name>
        <dbReference type="ChEBI" id="CHEBI:57540"/>
    </ligand>
</feature>
<feature type="binding site" evidence="1">
    <location>
        <begin position="274"/>
        <end position="279"/>
    </location>
    <ligand>
        <name>NAD(+)</name>
        <dbReference type="ChEBI" id="CHEBI:57540"/>
    </ligand>
</feature>
<feature type="binding site" evidence="2">
    <location>
        <begin position="274"/>
        <end position="275"/>
    </location>
    <ligand>
        <name>NAD(+)</name>
        <dbReference type="ChEBI" id="CHEBI:57540"/>
    </ligand>
</feature>
<feature type="binding site" evidence="2">
    <location>
        <begin position="296"/>
        <end position="297"/>
    </location>
    <ligand>
        <name>NAD(+)</name>
        <dbReference type="ChEBI" id="CHEBI:57540"/>
    </ligand>
</feature>
<feature type="binding site" evidence="2">
    <location>
        <position position="331"/>
    </location>
    <ligand>
        <name>(S)-2-amino-6-oxohexanoate</name>
        <dbReference type="ChEBI" id="CHEBI:58321"/>
    </ligand>
</feature>
<feature type="binding site" evidence="2">
    <location>
        <position position="427"/>
    </location>
    <ligand>
        <name>NAD(+)</name>
        <dbReference type="ChEBI" id="CHEBI:57540"/>
    </ligand>
</feature>
<feature type="binding site" evidence="2">
    <location>
        <position position="489"/>
    </location>
    <ligand>
        <name>(S)-2-amino-6-oxohexanoate</name>
        <dbReference type="ChEBI" id="CHEBI:58321"/>
    </ligand>
</feature>
<feature type="binding site" evidence="2">
    <location>
        <position position="490"/>
    </location>
    <ligand>
        <name>(S)-2-amino-6-oxohexanoate</name>
        <dbReference type="ChEBI" id="CHEBI:58321"/>
    </ligand>
</feature>
<feature type="site" description="Transition state stabilizer" evidence="1">
    <location>
        <position position="195"/>
    </location>
</feature>
<feature type="modified residue" description="N6-acetyllysine; alternate" evidence="3">
    <location>
        <position position="94"/>
    </location>
</feature>
<feature type="modified residue" description="N6-succinyllysine; alternate" evidence="3">
    <location>
        <position position="94"/>
    </location>
</feature>
<feature type="modified residue" description="N6-acetyllysine" evidence="3">
    <location>
        <position position="462"/>
    </location>
</feature>
<feature type="modified residue" description="N6-acetyllysine" evidence="3">
    <location>
        <position position="500"/>
    </location>
</feature>
<feature type="modified residue" description="N6-succinyllysine" evidence="3">
    <location>
        <position position="537"/>
    </location>
</feature>
<name>AL7A1_BOVIN</name>
<sequence length="539" mass="58582">MWRVPGLLCVRVARKSKFSGSWNRPAAFMSTLLINQPQYAWLKELGLREENDGVYNGSWGGRGEVITTYCPANNEPIARVRQASMADYEETVEKAREAWSIWADVPAPKRGEVVRQIGDALREKIQVLGSLVSLEMGKILVEGVGEVQEYVDVCDYAVGLSRMIGGPILPSERPGHALIEQWNPVGLVGIITAFNFPVAVYGWNNAIAMICGNACLWKGAPTTSLISVAVTKIIAKVLEDNKLPGAICSLTCGGADIGTAMAKDERVDLLSFTGSTQVGKQVALMVQERFGRSLLELGGNNAIIAFEDADLSLVVPSALFAAVGTAGQRCTTARRLFLHESIHDEVVNRLKKAYAQIRVGNPWDSNVLYGPLHTKQAVSMFLGAVEEAKKEGGTVVYGGKVMDRPGNYVEPTIVTGLDHDASIVHTETFAPILYVFKFKNEDEVFAWNNEVKQGLSSSIFTKDMGRIFRWLGPKGSDCGIVNVNIPTSGAEIGGAFGGEKHTGGGRESGSDAWKQYMRRSTCTINYSKDLPLAQGIKFQ</sequence>
<proteinExistence type="evidence at transcript level"/>
<reference key="1">
    <citation type="submission" date="2005-09" db="EMBL/GenBank/DDBJ databases">
        <authorList>
            <consortium name="NIH - Mammalian Gene Collection (MGC) project"/>
        </authorList>
    </citation>
    <scope>NUCLEOTIDE SEQUENCE [LARGE SCALE MRNA]</scope>
    <source>
        <strain>Hereford</strain>
        <tissue>Heart ventricle</tissue>
    </source>
</reference>